<organism>
    <name type="scientific">Maricaulis maris (strain MCS10)</name>
    <name type="common">Caulobacter maris</name>
    <dbReference type="NCBI Taxonomy" id="394221"/>
    <lineage>
        <taxon>Bacteria</taxon>
        <taxon>Pseudomonadati</taxon>
        <taxon>Pseudomonadota</taxon>
        <taxon>Alphaproteobacteria</taxon>
        <taxon>Maricaulales</taxon>
        <taxon>Maricaulaceae</taxon>
        <taxon>Maricaulis</taxon>
    </lineage>
</organism>
<dbReference type="EMBL" id="CP000449">
    <property type="protein sequence ID" value="ABI66068.1"/>
    <property type="molecule type" value="Genomic_DNA"/>
</dbReference>
<dbReference type="RefSeq" id="WP_011643714.1">
    <property type="nucleotide sequence ID" value="NC_008347.1"/>
</dbReference>
<dbReference type="SMR" id="Q0ANR9"/>
<dbReference type="STRING" id="394221.Mmar10_1776"/>
<dbReference type="KEGG" id="mmr:Mmar10_1776"/>
<dbReference type="eggNOG" id="COG0200">
    <property type="taxonomic scope" value="Bacteria"/>
</dbReference>
<dbReference type="HOGENOM" id="CLU_055188_4_0_5"/>
<dbReference type="OrthoDB" id="9810293at2"/>
<dbReference type="Proteomes" id="UP000001964">
    <property type="component" value="Chromosome"/>
</dbReference>
<dbReference type="GO" id="GO:0022625">
    <property type="term" value="C:cytosolic large ribosomal subunit"/>
    <property type="evidence" value="ECO:0007669"/>
    <property type="project" value="TreeGrafter"/>
</dbReference>
<dbReference type="GO" id="GO:0019843">
    <property type="term" value="F:rRNA binding"/>
    <property type="evidence" value="ECO:0007669"/>
    <property type="project" value="UniProtKB-UniRule"/>
</dbReference>
<dbReference type="GO" id="GO:0003735">
    <property type="term" value="F:structural constituent of ribosome"/>
    <property type="evidence" value="ECO:0007669"/>
    <property type="project" value="InterPro"/>
</dbReference>
<dbReference type="GO" id="GO:0006412">
    <property type="term" value="P:translation"/>
    <property type="evidence" value="ECO:0007669"/>
    <property type="project" value="UniProtKB-UniRule"/>
</dbReference>
<dbReference type="Gene3D" id="3.100.10.10">
    <property type="match status" value="1"/>
</dbReference>
<dbReference type="HAMAP" id="MF_01341">
    <property type="entry name" value="Ribosomal_uL15"/>
    <property type="match status" value="1"/>
</dbReference>
<dbReference type="InterPro" id="IPR030878">
    <property type="entry name" value="Ribosomal_uL15"/>
</dbReference>
<dbReference type="InterPro" id="IPR021131">
    <property type="entry name" value="Ribosomal_uL15/eL18"/>
</dbReference>
<dbReference type="InterPro" id="IPR036227">
    <property type="entry name" value="Ribosomal_uL15/eL18_sf"/>
</dbReference>
<dbReference type="InterPro" id="IPR005749">
    <property type="entry name" value="Ribosomal_uL15_bac-type"/>
</dbReference>
<dbReference type="InterPro" id="IPR001196">
    <property type="entry name" value="Ribosomal_uL15_CS"/>
</dbReference>
<dbReference type="NCBIfam" id="TIGR01071">
    <property type="entry name" value="rplO_bact"/>
    <property type="match status" value="1"/>
</dbReference>
<dbReference type="PANTHER" id="PTHR12934">
    <property type="entry name" value="50S RIBOSOMAL PROTEIN L15"/>
    <property type="match status" value="1"/>
</dbReference>
<dbReference type="PANTHER" id="PTHR12934:SF11">
    <property type="entry name" value="LARGE RIBOSOMAL SUBUNIT PROTEIN UL15M"/>
    <property type="match status" value="1"/>
</dbReference>
<dbReference type="Pfam" id="PF00828">
    <property type="entry name" value="Ribosomal_L27A"/>
    <property type="match status" value="1"/>
</dbReference>
<dbReference type="SUPFAM" id="SSF52080">
    <property type="entry name" value="Ribosomal proteins L15p and L18e"/>
    <property type="match status" value="1"/>
</dbReference>
<dbReference type="PROSITE" id="PS00475">
    <property type="entry name" value="RIBOSOMAL_L15"/>
    <property type="match status" value="1"/>
</dbReference>
<reference key="1">
    <citation type="submission" date="2006-08" db="EMBL/GenBank/DDBJ databases">
        <title>Complete sequence of Maricaulis maris MCS10.</title>
        <authorList>
            <consortium name="US DOE Joint Genome Institute"/>
            <person name="Copeland A."/>
            <person name="Lucas S."/>
            <person name="Lapidus A."/>
            <person name="Barry K."/>
            <person name="Detter J.C."/>
            <person name="Glavina del Rio T."/>
            <person name="Hammon N."/>
            <person name="Israni S."/>
            <person name="Dalin E."/>
            <person name="Tice H."/>
            <person name="Pitluck S."/>
            <person name="Saunders E."/>
            <person name="Brettin T."/>
            <person name="Bruce D."/>
            <person name="Han C."/>
            <person name="Tapia R."/>
            <person name="Gilna P."/>
            <person name="Schmutz J."/>
            <person name="Larimer F."/>
            <person name="Land M."/>
            <person name="Hauser L."/>
            <person name="Kyrpides N."/>
            <person name="Mikhailova N."/>
            <person name="Viollier P."/>
            <person name="Stephens C."/>
            <person name="Richardson P."/>
        </authorList>
    </citation>
    <scope>NUCLEOTIDE SEQUENCE [LARGE SCALE GENOMIC DNA]</scope>
    <source>
        <strain>MCS10</strain>
    </source>
</reference>
<name>RL15_MARMM</name>
<sequence>MRLNELRDNDGATKIRTRVGRGIGSGKGKTGGRGVKGQKSRSGVAIKGFEGGQMPLHMRLPKRGFNKPNRKAWAEVNLGRLEKAIAEGKIDAKKPIDADVLIAAGLVRRALDGVRLLAKGELKSKVEITLAGASKAAIAAVEKAGGKVTLTAVADDAAE</sequence>
<accession>Q0ANR9</accession>
<feature type="chain" id="PRO_1000054489" description="Large ribosomal subunit protein uL15">
    <location>
        <begin position="1"/>
        <end position="159"/>
    </location>
</feature>
<feature type="region of interest" description="Disordered" evidence="2">
    <location>
        <begin position="1"/>
        <end position="41"/>
    </location>
</feature>
<feature type="compositionally biased region" description="Basic and acidic residues" evidence="2">
    <location>
        <begin position="1"/>
        <end position="13"/>
    </location>
</feature>
<feature type="compositionally biased region" description="Gly residues" evidence="2">
    <location>
        <begin position="21"/>
        <end position="35"/>
    </location>
</feature>
<protein>
    <recommendedName>
        <fullName evidence="1">Large ribosomal subunit protein uL15</fullName>
    </recommendedName>
    <alternativeName>
        <fullName evidence="3">50S ribosomal protein L15</fullName>
    </alternativeName>
</protein>
<keyword id="KW-1185">Reference proteome</keyword>
<keyword id="KW-0687">Ribonucleoprotein</keyword>
<keyword id="KW-0689">Ribosomal protein</keyword>
<keyword id="KW-0694">RNA-binding</keyword>
<keyword id="KW-0699">rRNA-binding</keyword>
<proteinExistence type="inferred from homology"/>
<evidence type="ECO:0000255" key="1">
    <source>
        <dbReference type="HAMAP-Rule" id="MF_01341"/>
    </source>
</evidence>
<evidence type="ECO:0000256" key="2">
    <source>
        <dbReference type="SAM" id="MobiDB-lite"/>
    </source>
</evidence>
<evidence type="ECO:0000305" key="3"/>
<comment type="function">
    <text evidence="1">Binds to the 23S rRNA.</text>
</comment>
<comment type="subunit">
    <text evidence="1">Part of the 50S ribosomal subunit.</text>
</comment>
<comment type="similarity">
    <text evidence="1">Belongs to the universal ribosomal protein uL15 family.</text>
</comment>
<gene>
    <name evidence="1" type="primary">rplO</name>
    <name type="ordered locus">Mmar10_1776</name>
</gene>